<proteinExistence type="evidence at transcript level"/>
<name>MNAR1_RAT</name>
<evidence type="ECO:0000250" key="1">
    <source>
        <dbReference type="UniProtKB" id="Q8K3V7"/>
    </source>
</evidence>
<evidence type="ECO:0000250" key="2">
    <source>
        <dbReference type="UniProtKB" id="Q9UPX6"/>
    </source>
</evidence>
<evidence type="ECO:0000255" key="3"/>
<evidence type="ECO:0000256" key="4">
    <source>
        <dbReference type="SAM" id="MobiDB-lite"/>
    </source>
</evidence>
<evidence type="ECO:0000269" key="5">
    <source>
    </source>
</evidence>
<evidence type="ECO:0000303" key="6">
    <source>
    </source>
</evidence>
<evidence type="ECO:0000305" key="7"/>
<dbReference type="EMBL" id="AABR07071020">
    <property type="status" value="NOT_ANNOTATED_CDS"/>
    <property type="molecule type" value="Genomic_DNA"/>
</dbReference>
<dbReference type="RefSeq" id="NP_001363996.1">
    <property type="nucleotide sequence ID" value="NM_001377067.1"/>
</dbReference>
<dbReference type="RefSeq" id="XP_001055454.1">
    <property type="nucleotide sequence ID" value="XM_001055454.5"/>
</dbReference>
<dbReference type="RefSeq" id="XP_001066296.1">
    <property type="nucleotide sequence ID" value="XM_001066296.5"/>
</dbReference>
<dbReference type="RefSeq" id="XP_017451604.1">
    <property type="nucleotide sequence ID" value="XM_017596115.1"/>
</dbReference>
<dbReference type="RefSeq" id="XP_017451605.1">
    <property type="nucleotide sequence ID" value="XM_017596116.1"/>
</dbReference>
<dbReference type="RefSeq" id="XP_017459188.1">
    <property type="nucleotide sequence ID" value="XM_017603699.1"/>
</dbReference>
<dbReference type="RefSeq" id="XP_017459189.1">
    <property type="nucleotide sequence ID" value="XM_017603700.1"/>
</dbReference>
<dbReference type="SMR" id="D3ZJ47"/>
<dbReference type="FunCoup" id="D3ZJ47">
    <property type="interactions" value="667"/>
</dbReference>
<dbReference type="STRING" id="10116.ENSRNOP00000018553"/>
<dbReference type="GlyGen" id="D3ZJ47">
    <property type="glycosylation" value="1 site"/>
</dbReference>
<dbReference type="iPTMnet" id="D3ZJ47"/>
<dbReference type="PhosphoSitePlus" id="D3ZJ47"/>
<dbReference type="PaxDb" id="10116-ENSRNOP00000018553"/>
<dbReference type="Ensembl" id="ENSRNOT00000018553.5">
    <property type="protein sequence ID" value="ENSRNOP00000018553.3"/>
    <property type="gene ID" value="ENSRNOG00000013399.6"/>
</dbReference>
<dbReference type="GeneID" id="501033"/>
<dbReference type="UCSC" id="RGD:1591930">
    <property type="organism name" value="rat"/>
</dbReference>
<dbReference type="AGR" id="RGD:1591930"/>
<dbReference type="RGD" id="1591930">
    <property type="gene designation" value="Minar1"/>
</dbReference>
<dbReference type="eggNOG" id="ENOG502QSCS">
    <property type="taxonomic scope" value="Eukaryota"/>
</dbReference>
<dbReference type="GeneTree" id="ENSGT00530000063851"/>
<dbReference type="HOGENOM" id="CLU_016692_0_0_1"/>
<dbReference type="InParanoid" id="D3ZJ47"/>
<dbReference type="OMA" id="IMQANYA"/>
<dbReference type="TreeFam" id="TF350677"/>
<dbReference type="PRO" id="PR:D3ZJ47"/>
<dbReference type="Proteomes" id="UP000002494">
    <property type="component" value="Chromosome 8"/>
</dbReference>
<dbReference type="GO" id="GO:0005886">
    <property type="term" value="C:plasma membrane"/>
    <property type="evidence" value="ECO:0000250"/>
    <property type="project" value="UniProtKB"/>
</dbReference>
<dbReference type="GO" id="GO:0016525">
    <property type="term" value="P:negative regulation of angiogenesis"/>
    <property type="evidence" value="ECO:0000266"/>
    <property type="project" value="RGD"/>
</dbReference>
<dbReference type="GO" id="GO:0030308">
    <property type="term" value="P:negative regulation of cell growth"/>
    <property type="evidence" value="ECO:0000250"/>
    <property type="project" value="UniProtKB"/>
</dbReference>
<dbReference type="GO" id="GO:0008285">
    <property type="term" value="P:negative regulation of cell population proliferation"/>
    <property type="evidence" value="ECO:0000266"/>
    <property type="project" value="RGD"/>
</dbReference>
<dbReference type="GO" id="GO:0010977">
    <property type="term" value="P:negative regulation of neuron projection development"/>
    <property type="evidence" value="ECO:0000315"/>
    <property type="project" value="UniProtKB"/>
</dbReference>
<dbReference type="GO" id="GO:0031397">
    <property type="term" value="P:negative regulation of protein ubiquitination"/>
    <property type="evidence" value="ECO:0000315"/>
    <property type="project" value="UniProtKB"/>
</dbReference>
<dbReference type="GO" id="GO:0032007">
    <property type="term" value="P:negative regulation of TOR signaling"/>
    <property type="evidence" value="ECO:0000315"/>
    <property type="project" value="UniProtKB"/>
</dbReference>
<dbReference type="InterPro" id="IPR039706">
    <property type="entry name" value="MINAR1-like"/>
</dbReference>
<dbReference type="InterPro" id="IPR009626">
    <property type="entry name" value="MINAR1-like_C"/>
</dbReference>
<dbReference type="InterPro" id="IPR055117">
    <property type="entry name" value="MINAR1_N"/>
</dbReference>
<dbReference type="PANTHER" id="PTHR31530:SF2">
    <property type="entry name" value="MAJOR INTRINSICALLY DISORDERED NOTCH2-BINDING RECEPTOR 1"/>
    <property type="match status" value="1"/>
</dbReference>
<dbReference type="PANTHER" id="PTHR31530">
    <property type="entry name" value="MAJOR INTRINSICALLY DISORDERED NOTCH2-BINDING RECEPTOR 1 MINAR1 FAMILY MEMBER"/>
    <property type="match status" value="1"/>
</dbReference>
<dbReference type="Pfam" id="PF06789">
    <property type="entry name" value="MINAR1_C"/>
    <property type="match status" value="1"/>
</dbReference>
<dbReference type="Pfam" id="PF22948">
    <property type="entry name" value="MINAR1_N"/>
    <property type="match status" value="1"/>
</dbReference>
<protein>
    <recommendedName>
        <fullName>Major intrinsically disordered Notch2-binding receptor 1</fullName>
    </recommendedName>
    <alternativeName>
        <fullName>Membrane integral NOTCH2-associated receptor 1</fullName>
    </alternativeName>
    <alternativeName>
        <fullName evidence="6">Ubiquitination and mTOR signaling protein</fullName>
    </alternativeName>
</protein>
<organism>
    <name type="scientific">Rattus norvegicus</name>
    <name type="common">Rat</name>
    <dbReference type="NCBI Taxonomy" id="10116"/>
    <lineage>
        <taxon>Eukaryota</taxon>
        <taxon>Metazoa</taxon>
        <taxon>Chordata</taxon>
        <taxon>Craniata</taxon>
        <taxon>Vertebrata</taxon>
        <taxon>Euteleostomi</taxon>
        <taxon>Mammalia</taxon>
        <taxon>Eutheria</taxon>
        <taxon>Euarchontoglires</taxon>
        <taxon>Glires</taxon>
        <taxon>Rodentia</taxon>
        <taxon>Myomorpha</taxon>
        <taxon>Muroidea</taxon>
        <taxon>Muridae</taxon>
        <taxon>Murinae</taxon>
        <taxon>Rattus</taxon>
    </lineage>
</organism>
<comment type="function">
    <text evidence="2 5">Intrinsically disordered protein which may negatively regulate mTOR signaling pathway by stabilizing the mTOR complex component DEPTOR (PubMed:30080879). Negatively regulates angiogenesis (By similarity). Negatively regulates cell growth (By similarity). Negatively regulates neurite outgrowth in hippocampal neurons (PubMed:30080879).</text>
</comment>
<comment type="subunit">
    <text evidence="2">Interacts with NOTCH2; this interaction increases MINAR1 stability. Interacts (via N-terminus) with DEPTOR (via PDZ domain); this interaction may stabilize DEPTOR protein by impairing its ubiquitination.</text>
</comment>
<comment type="subcellular location">
    <subcellularLocation>
        <location evidence="2">Cell membrane</location>
        <topology evidence="2">Single-pass type IV membrane protein</topology>
    </subcellularLocation>
</comment>
<comment type="induction">
    <text evidence="5">Up-regulated by NGF.</text>
</comment>
<comment type="similarity">
    <text evidence="7">Belongs to the MINAR family.</text>
</comment>
<comment type="caution">
    <text evidence="2">MINAR1 topology is a matter of debate, some authors think the N-terminus is extracellular, while preliminary experimental results suggest a cytosolic location.</text>
</comment>
<accession>D3ZJ47</accession>
<sequence>MEANQEASLFLVKILEELDSKQNTVSYQDLCKSLCAQFDLSQLAKLRSVLFYTACLDPNFPATLFKDKMKCSVNNQQSKKIMVAADIVTIFNLIQMNGGTAKEKLPTSCHKVRKEEASFESCRSDAEVCSPTVCEPLNCELSERPFSRGYPTRQSSKCRKMDCKECPQFVPASEPNFLLGVSKEVKNRAASLDRLQALSPYSVASPQPCEMQRTYFPMNIENESISDQDSLPIGQGIKETFISSEEPFMVQSCVQKRNIFKEDFHNLMTVSPSLVGTTNKAEEDHGEPRSQKELHKPPFFNHSFEMPYHSQYLNPVYSPIPDKRRAKHESLDDLQASTYFGPTPVMGTQDTRRCPGRPSKQTPWPAKSWSLNTEEVPDFERSFFNRNPSEEKLRYPNSGNQTPNFSGPDRHPVYLVPKDQQKVLPAGYAVKPNGLKSKEIPSPVDLEKHEAVKKFKDKSISCTSGQHSSDTSSVGTQTEQHVLDPPKCKDLCSAGQAKYSDRHAMKHSDDDSEIVSDDISDIFRFLDDMSISGSTGVIQSSCYNSTGSLSQLHKSDCDSSPEHNLAKITNGVSGSKGDKCNRPENVHHSEEELKSSVCKLVLRIGEIERKLESLAGVREEISQVLGKLNKLDQKIQQPEKVNVQIDLNSLTSEAPSDDSASPRVFHAHSGSHGPKLENSPDWCCSDVSGSNSESLRVKALKKSLFTRPSSRSLTEENSATESKIASISNSPRDWRTITYTNRMSLNEEEIKDAGPANNKDWHRKSKEADRQYDIPPQHRLPKQPKDGFLVEQVFSPHPYPSSLKAHMKSNPLYTDMRLTELAEVKRGQPSWNIEEYARNTGDKGKLTALDLQTQESLNPNNLEYWMEDIYTPGYDSLLKRKEAEFRRAKVCKIAALITAAACTVILVIVVPICTMKS</sequence>
<feature type="chain" id="PRO_0000445579" description="Major intrinsically disordered Notch2-binding receptor 1">
    <location>
        <begin position="1"/>
        <end position="917"/>
    </location>
</feature>
<feature type="topological domain" description="Cytoplasmic" evidence="7">
    <location>
        <begin position="1"/>
        <end position="892"/>
    </location>
</feature>
<feature type="transmembrane region" description="Helical" evidence="3">
    <location>
        <begin position="893"/>
        <end position="913"/>
    </location>
</feature>
<feature type="topological domain" description="Extracellular" evidence="7">
    <location>
        <begin position="914"/>
        <end position="917"/>
    </location>
</feature>
<feature type="region of interest" description="Disordered" evidence="4">
    <location>
        <begin position="337"/>
        <end position="367"/>
    </location>
</feature>
<feature type="region of interest" description="Disordered" evidence="4">
    <location>
        <begin position="389"/>
        <end position="410"/>
    </location>
</feature>
<feature type="region of interest" description="Disordered" evidence="4">
    <location>
        <begin position="457"/>
        <end position="476"/>
    </location>
</feature>
<feature type="region of interest" description="Disordered" evidence="4">
    <location>
        <begin position="568"/>
        <end position="588"/>
    </location>
</feature>
<feature type="region of interest" description="Disordered" evidence="4">
    <location>
        <begin position="652"/>
        <end position="679"/>
    </location>
</feature>
<feature type="region of interest" description="Disordered" evidence="4">
    <location>
        <begin position="706"/>
        <end position="727"/>
    </location>
</feature>
<feature type="region of interest" description="Disordered" evidence="4">
    <location>
        <begin position="746"/>
        <end position="783"/>
    </location>
</feature>
<feature type="compositionally biased region" description="Polar residues" evidence="4">
    <location>
        <begin position="460"/>
        <end position="476"/>
    </location>
</feature>
<feature type="compositionally biased region" description="Basic and acidic residues" evidence="4">
    <location>
        <begin position="576"/>
        <end position="588"/>
    </location>
</feature>
<feature type="modified residue" description="Phosphoserine" evidence="1">
    <location>
        <position position="712"/>
    </location>
</feature>
<gene>
    <name type="primary">Minar1</name>
    <name evidence="6" type="synonym">Ubtor</name>
</gene>
<reference key="1">
    <citation type="journal article" date="2004" name="Nature">
        <title>Genome sequence of the Brown Norway rat yields insights into mammalian evolution.</title>
        <authorList>
            <person name="Gibbs R.A."/>
            <person name="Weinstock G.M."/>
            <person name="Metzker M.L."/>
            <person name="Muzny D.M."/>
            <person name="Sodergren E.J."/>
            <person name="Scherer S."/>
            <person name="Scott G."/>
            <person name="Steffen D."/>
            <person name="Worley K.C."/>
            <person name="Burch P.E."/>
            <person name="Okwuonu G."/>
            <person name="Hines S."/>
            <person name="Lewis L."/>
            <person name="Deramo C."/>
            <person name="Delgado O."/>
            <person name="Dugan-Rocha S."/>
            <person name="Miner G."/>
            <person name="Morgan M."/>
            <person name="Hawes A."/>
            <person name="Gill R."/>
            <person name="Holt R.A."/>
            <person name="Adams M.D."/>
            <person name="Amanatides P.G."/>
            <person name="Baden-Tillson H."/>
            <person name="Barnstead M."/>
            <person name="Chin S."/>
            <person name="Evans C.A."/>
            <person name="Ferriera S."/>
            <person name="Fosler C."/>
            <person name="Glodek A."/>
            <person name="Gu Z."/>
            <person name="Jennings D."/>
            <person name="Kraft C.L."/>
            <person name="Nguyen T."/>
            <person name="Pfannkoch C.M."/>
            <person name="Sitter C."/>
            <person name="Sutton G.G."/>
            <person name="Venter J.C."/>
            <person name="Woodage T."/>
            <person name="Smith D."/>
            <person name="Lee H.-M."/>
            <person name="Gustafson E."/>
            <person name="Cahill P."/>
            <person name="Kana A."/>
            <person name="Doucette-Stamm L."/>
            <person name="Weinstock K."/>
            <person name="Fechtel K."/>
            <person name="Weiss R.B."/>
            <person name="Dunn D.M."/>
            <person name="Green E.D."/>
            <person name="Blakesley R.W."/>
            <person name="Bouffard G.G."/>
            <person name="De Jong P.J."/>
            <person name="Osoegawa K."/>
            <person name="Zhu B."/>
            <person name="Marra M."/>
            <person name="Schein J."/>
            <person name="Bosdet I."/>
            <person name="Fjell C."/>
            <person name="Jones S."/>
            <person name="Krzywinski M."/>
            <person name="Mathewson C."/>
            <person name="Siddiqui A."/>
            <person name="Wye N."/>
            <person name="McPherson J."/>
            <person name="Zhao S."/>
            <person name="Fraser C.M."/>
            <person name="Shetty J."/>
            <person name="Shatsman S."/>
            <person name="Geer K."/>
            <person name="Chen Y."/>
            <person name="Abramzon S."/>
            <person name="Nierman W.C."/>
            <person name="Havlak P.H."/>
            <person name="Chen R."/>
            <person name="Durbin K.J."/>
            <person name="Egan A."/>
            <person name="Ren Y."/>
            <person name="Song X.-Z."/>
            <person name="Li B."/>
            <person name="Liu Y."/>
            <person name="Qin X."/>
            <person name="Cawley S."/>
            <person name="Cooney A.J."/>
            <person name="D'Souza L.M."/>
            <person name="Martin K."/>
            <person name="Wu J.Q."/>
            <person name="Gonzalez-Garay M.L."/>
            <person name="Jackson A.R."/>
            <person name="Kalafus K.J."/>
            <person name="McLeod M.P."/>
            <person name="Milosavljevic A."/>
            <person name="Virk D."/>
            <person name="Volkov A."/>
            <person name="Wheeler D.A."/>
            <person name="Zhang Z."/>
            <person name="Bailey J.A."/>
            <person name="Eichler E.E."/>
            <person name="Tuzun E."/>
            <person name="Birney E."/>
            <person name="Mongin E."/>
            <person name="Ureta-Vidal A."/>
            <person name="Woodwark C."/>
            <person name="Zdobnov E."/>
            <person name="Bork P."/>
            <person name="Suyama M."/>
            <person name="Torrents D."/>
            <person name="Alexandersson M."/>
            <person name="Trask B.J."/>
            <person name="Young J.M."/>
            <person name="Huang H."/>
            <person name="Wang H."/>
            <person name="Xing H."/>
            <person name="Daniels S."/>
            <person name="Gietzen D."/>
            <person name="Schmidt J."/>
            <person name="Stevens K."/>
            <person name="Vitt U."/>
            <person name="Wingrove J."/>
            <person name="Camara F."/>
            <person name="Mar Alba M."/>
            <person name="Abril J.F."/>
            <person name="Guigo R."/>
            <person name="Smit A."/>
            <person name="Dubchak I."/>
            <person name="Rubin E.M."/>
            <person name="Couronne O."/>
            <person name="Poliakov A."/>
            <person name="Huebner N."/>
            <person name="Ganten D."/>
            <person name="Goesele C."/>
            <person name="Hummel O."/>
            <person name="Kreitler T."/>
            <person name="Lee Y.-A."/>
            <person name="Monti J."/>
            <person name="Schulz H."/>
            <person name="Zimdahl H."/>
            <person name="Himmelbauer H."/>
            <person name="Lehrach H."/>
            <person name="Jacob H.J."/>
            <person name="Bromberg S."/>
            <person name="Gullings-Handley J."/>
            <person name="Jensen-Seaman M.I."/>
            <person name="Kwitek A.E."/>
            <person name="Lazar J."/>
            <person name="Pasko D."/>
            <person name="Tonellato P.J."/>
            <person name="Twigger S."/>
            <person name="Ponting C.P."/>
            <person name="Duarte J.M."/>
            <person name="Rice S."/>
            <person name="Goodstadt L."/>
            <person name="Beatson S.A."/>
            <person name="Emes R.D."/>
            <person name="Winter E.E."/>
            <person name="Webber C."/>
            <person name="Brandt P."/>
            <person name="Nyakatura G."/>
            <person name="Adetobi M."/>
            <person name="Chiaromonte F."/>
            <person name="Elnitski L."/>
            <person name="Eswara P."/>
            <person name="Hardison R.C."/>
            <person name="Hou M."/>
            <person name="Kolbe D."/>
            <person name="Makova K."/>
            <person name="Miller W."/>
            <person name="Nekrutenko A."/>
            <person name="Riemer C."/>
            <person name="Schwartz S."/>
            <person name="Taylor J."/>
            <person name="Yang S."/>
            <person name="Zhang Y."/>
            <person name="Lindpaintner K."/>
            <person name="Andrews T.D."/>
            <person name="Caccamo M."/>
            <person name="Clamp M."/>
            <person name="Clarke L."/>
            <person name="Curwen V."/>
            <person name="Durbin R.M."/>
            <person name="Eyras E."/>
            <person name="Searle S.M."/>
            <person name="Cooper G.M."/>
            <person name="Batzoglou S."/>
            <person name="Brudno M."/>
            <person name="Sidow A."/>
            <person name="Stone E.A."/>
            <person name="Payseur B.A."/>
            <person name="Bourque G."/>
            <person name="Lopez-Otin C."/>
            <person name="Puente X.S."/>
            <person name="Chakrabarti K."/>
            <person name="Chatterji S."/>
            <person name="Dewey C."/>
            <person name="Pachter L."/>
            <person name="Bray N."/>
            <person name="Yap V.B."/>
            <person name="Caspi A."/>
            <person name="Tesler G."/>
            <person name="Pevzner P.A."/>
            <person name="Haussler D."/>
            <person name="Roskin K.M."/>
            <person name="Baertsch R."/>
            <person name="Clawson H."/>
            <person name="Furey T.S."/>
            <person name="Hinrichs A.S."/>
            <person name="Karolchik D."/>
            <person name="Kent W.J."/>
            <person name="Rosenbloom K.R."/>
            <person name="Trumbower H."/>
            <person name="Weirauch M."/>
            <person name="Cooper D.N."/>
            <person name="Stenson P.D."/>
            <person name="Ma B."/>
            <person name="Brent M."/>
            <person name="Arumugam M."/>
            <person name="Shteynberg D."/>
            <person name="Copley R.R."/>
            <person name="Taylor M.S."/>
            <person name="Riethman H."/>
            <person name="Mudunuri U."/>
            <person name="Peterson J."/>
            <person name="Guyer M."/>
            <person name="Felsenfeld A."/>
            <person name="Old S."/>
            <person name="Mockrin S."/>
            <person name="Collins F.S."/>
        </authorList>
    </citation>
    <scope>NUCLEOTIDE SEQUENCE [LARGE SCALE GENOMIC DNA]</scope>
    <source>
        <strain>Brown Norway</strain>
    </source>
</reference>
<reference key="2">
    <citation type="journal article" date="2018" name="PLoS Genet.">
        <title>UBTOR/KIAA1024 regulates neurite outgrowth and neoplasia through mTOR signaling.</title>
        <authorList>
            <person name="Zhang H."/>
            <person name="Zhang Q."/>
            <person name="Gao G."/>
            <person name="Wang X."/>
            <person name="Wang T."/>
            <person name="Kong Z."/>
            <person name="Wang G."/>
            <person name="Zhang C."/>
            <person name="Wang Y."/>
            <person name="Peng G."/>
        </authorList>
    </citation>
    <scope>FUNCTION</scope>
    <scope>INDUCTION BY NGF</scope>
</reference>
<keyword id="KW-1003">Cell membrane</keyword>
<keyword id="KW-0472">Membrane</keyword>
<keyword id="KW-0597">Phosphoprotein</keyword>
<keyword id="KW-1185">Reference proteome</keyword>
<keyword id="KW-0812">Transmembrane</keyword>
<keyword id="KW-1133">Transmembrane helix</keyword>